<evidence type="ECO:0000255" key="1">
    <source>
        <dbReference type="HAMAP-Rule" id="MF_00808"/>
    </source>
</evidence>
<evidence type="ECO:0000305" key="2"/>
<gene>
    <name evidence="1" type="primary">psbT</name>
    <name type="ordered locus">P9215_03391</name>
</gene>
<keyword id="KW-0472">Membrane</keyword>
<keyword id="KW-0602">Photosynthesis</keyword>
<keyword id="KW-0604">Photosystem II</keyword>
<keyword id="KW-0793">Thylakoid</keyword>
<keyword id="KW-0812">Transmembrane</keyword>
<keyword id="KW-1133">Transmembrane helix</keyword>
<protein>
    <recommendedName>
        <fullName evidence="1">Photosystem II reaction center protein T</fullName>
        <shortName evidence="1">PSII-T</shortName>
    </recommendedName>
</protein>
<accession>A8G2X5</accession>
<feature type="chain" id="PRO_1000062276" description="Photosystem II reaction center protein T">
    <location>
        <begin position="1"/>
        <end position="32"/>
    </location>
</feature>
<feature type="transmembrane region" description="Helical" evidence="1">
    <location>
        <begin position="3"/>
        <end position="23"/>
    </location>
</feature>
<comment type="function">
    <text evidence="1">Found at the monomer-monomer interface of the photosystem II (PS II) dimer, plays a role in assembly and dimerization of PSII. PSII is a light-driven water plastoquinone oxidoreductase, using light energy to abstract electrons from H(2)O, generating a proton gradient subsequently used for ATP formation.</text>
</comment>
<comment type="subunit">
    <text evidence="2">PSII is composed of 1 copy each of membrane proteins PsbA, PsbB, PsbC, PsbD, PsbE, PsbF, PsbH, PsbI, PsbJ, PsbK, PsbL, PsbM, PsbT, PsbX, PsbY, Psb30/Ycf12, peripheral proteins PsbO, CyanoQ (PsbQ), PsbU, PsbV and a large number of cofactors. It forms dimeric complexes.</text>
</comment>
<comment type="subcellular location">
    <subcellularLocation>
        <location evidence="1">Cellular thylakoid membrane</location>
        <topology evidence="1">Single-pass membrane protein</topology>
    </subcellularLocation>
</comment>
<comment type="similarity">
    <text evidence="1">Belongs to the PsbT family.</text>
</comment>
<proteinExistence type="inferred from homology"/>
<organism>
    <name type="scientific">Prochlorococcus marinus (strain MIT 9215)</name>
    <dbReference type="NCBI Taxonomy" id="93060"/>
    <lineage>
        <taxon>Bacteria</taxon>
        <taxon>Bacillati</taxon>
        <taxon>Cyanobacteriota</taxon>
        <taxon>Cyanophyceae</taxon>
        <taxon>Synechococcales</taxon>
        <taxon>Prochlorococcaceae</taxon>
        <taxon>Prochlorococcus</taxon>
    </lineage>
</organism>
<name>PSBT_PROM2</name>
<reference key="1">
    <citation type="journal article" date="2007" name="PLoS Genet.">
        <title>Patterns and implications of gene gain and loss in the evolution of Prochlorococcus.</title>
        <authorList>
            <person name="Kettler G.C."/>
            <person name="Martiny A.C."/>
            <person name="Huang K."/>
            <person name="Zucker J."/>
            <person name="Coleman M.L."/>
            <person name="Rodrigue S."/>
            <person name="Chen F."/>
            <person name="Lapidus A."/>
            <person name="Ferriera S."/>
            <person name="Johnson J."/>
            <person name="Steglich C."/>
            <person name="Church G.M."/>
            <person name="Richardson P."/>
            <person name="Chisholm S.W."/>
        </authorList>
    </citation>
    <scope>NUCLEOTIDE SEQUENCE [LARGE SCALE GENOMIC DNA]</scope>
    <source>
        <strain>MIT 9215</strain>
    </source>
</reference>
<dbReference type="EMBL" id="CP000825">
    <property type="protein sequence ID" value="ABV49956.1"/>
    <property type="molecule type" value="Genomic_DNA"/>
</dbReference>
<dbReference type="RefSeq" id="WP_011131951.1">
    <property type="nucleotide sequence ID" value="NC_009840.1"/>
</dbReference>
<dbReference type="SMR" id="A8G2X5"/>
<dbReference type="STRING" id="93060.P9215_03391"/>
<dbReference type="KEGG" id="pmh:P9215_03391"/>
<dbReference type="HOGENOM" id="CLU_217078_1_0_3"/>
<dbReference type="OrthoDB" id="427659at2"/>
<dbReference type="Proteomes" id="UP000002014">
    <property type="component" value="Chromosome"/>
</dbReference>
<dbReference type="GO" id="GO:0009539">
    <property type="term" value="C:photosystem II reaction center"/>
    <property type="evidence" value="ECO:0007669"/>
    <property type="project" value="InterPro"/>
</dbReference>
<dbReference type="GO" id="GO:0031676">
    <property type="term" value="C:plasma membrane-derived thylakoid membrane"/>
    <property type="evidence" value="ECO:0007669"/>
    <property type="project" value="UniProtKB-SubCell"/>
</dbReference>
<dbReference type="GO" id="GO:0015979">
    <property type="term" value="P:photosynthesis"/>
    <property type="evidence" value="ECO:0007669"/>
    <property type="project" value="UniProtKB-UniRule"/>
</dbReference>
<dbReference type="HAMAP" id="MF_00808">
    <property type="entry name" value="PSII_PsbT"/>
    <property type="match status" value="1"/>
</dbReference>
<dbReference type="InterPro" id="IPR001743">
    <property type="entry name" value="PSII_PsbT"/>
</dbReference>
<dbReference type="InterPro" id="IPR037268">
    <property type="entry name" value="PSII_PsbT_sf"/>
</dbReference>
<dbReference type="NCBIfam" id="NF008825">
    <property type="entry name" value="PRK11875.1"/>
    <property type="match status" value="1"/>
</dbReference>
<dbReference type="Pfam" id="PF01405">
    <property type="entry name" value="PsbT"/>
    <property type="match status" value="1"/>
</dbReference>
<dbReference type="SUPFAM" id="SSF161029">
    <property type="entry name" value="Photosystem II reaction center protein T, PsbT"/>
    <property type="match status" value="1"/>
</dbReference>
<sequence>MEAFAYVLILTLAVVTLFFAVAFRDPPKFDRK</sequence>